<reference key="1">
    <citation type="submission" date="2006-04" db="EMBL/GenBank/DDBJ databases">
        <authorList>
            <consortium name="NIH - Mammalian Gene Collection (MGC) project"/>
        </authorList>
    </citation>
    <scope>NUCLEOTIDE SEQUENCE [LARGE SCALE MRNA]</scope>
    <source>
        <strain>Hereford</strain>
        <tissue>Uterus</tissue>
    </source>
</reference>
<organism>
    <name type="scientific">Bos taurus</name>
    <name type="common">Bovine</name>
    <dbReference type="NCBI Taxonomy" id="9913"/>
    <lineage>
        <taxon>Eukaryota</taxon>
        <taxon>Metazoa</taxon>
        <taxon>Chordata</taxon>
        <taxon>Craniata</taxon>
        <taxon>Vertebrata</taxon>
        <taxon>Euteleostomi</taxon>
        <taxon>Mammalia</taxon>
        <taxon>Eutheria</taxon>
        <taxon>Laurasiatheria</taxon>
        <taxon>Artiodactyla</taxon>
        <taxon>Ruminantia</taxon>
        <taxon>Pecora</taxon>
        <taxon>Bovidae</taxon>
        <taxon>Bovinae</taxon>
        <taxon>Bos</taxon>
    </lineage>
</organism>
<accession>A4FUE7</accession>
<comment type="cofactor">
    <cofactor evidence="2">
        <name>Zn(2+)</name>
        <dbReference type="ChEBI" id="CHEBI:29105"/>
    </cofactor>
</comment>
<comment type="similarity">
    <text evidence="4">Belongs to the ZC2HC1 family.</text>
</comment>
<gene>
    <name type="primary">ZC2HC1A</name>
    <name type="synonym">FAM164A</name>
</gene>
<proteinExistence type="evidence at transcript level"/>
<feature type="chain" id="PRO_0000343651" description="Zinc finger C2HC domain-containing protein 1A">
    <location>
        <begin position="1"/>
        <end position="323"/>
    </location>
</feature>
<feature type="zinc finger region" description="C2HC/C3H-type 1" evidence="2">
    <location>
        <begin position="14"/>
        <end position="43"/>
    </location>
</feature>
<feature type="zinc finger region" description="C2HC/C3H-type 2" evidence="2">
    <location>
        <begin position="117"/>
        <end position="146"/>
    </location>
</feature>
<feature type="region of interest" description="Disordered" evidence="3">
    <location>
        <begin position="42"/>
        <end position="81"/>
    </location>
</feature>
<feature type="region of interest" description="Disordered" evidence="3">
    <location>
        <begin position="149"/>
        <end position="258"/>
    </location>
</feature>
<feature type="compositionally biased region" description="Basic and acidic residues" evidence="3">
    <location>
        <begin position="47"/>
        <end position="57"/>
    </location>
</feature>
<feature type="compositionally biased region" description="Polar residues" evidence="3">
    <location>
        <begin position="177"/>
        <end position="197"/>
    </location>
</feature>
<feature type="compositionally biased region" description="Low complexity" evidence="3">
    <location>
        <begin position="198"/>
        <end position="214"/>
    </location>
</feature>
<feature type="binding site" evidence="2">
    <location>
        <position position="18"/>
    </location>
    <ligand>
        <name>Zn(2+)</name>
        <dbReference type="ChEBI" id="CHEBI:29105"/>
        <label>1</label>
    </ligand>
</feature>
<feature type="binding site" evidence="2">
    <location>
        <position position="21"/>
    </location>
    <ligand>
        <name>Zn(2+)</name>
        <dbReference type="ChEBI" id="CHEBI:29105"/>
        <label>1</label>
    </ligand>
</feature>
<feature type="binding site" evidence="2">
    <location>
        <position position="33"/>
    </location>
    <ligand>
        <name>Zn(2+)</name>
        <dbReference type="ChEBI" id="CHEBI:29105"/>
        <label>1</label>
    </ligand>
</feature>
<feature type="binding site" evidence="2">
    <location>
        <position position="37"/>
    </location>
    <ligand>
        <name>Zn(2+)</name>
        <dbReference type="ChEBI" id="CHEBI:29105"/>
        <label>1</label>
    </ligand>
</feature>
<feature type="binding site" evidence="2">
    <location>
        <position position="121"/>
    </location>
    <ligand>
        <name>Zn(2+)</name>
        <dbReference type="ChEBI" id="CHEBI:29105"/>
        <label>2</label>
    </ligand>
</feature>
<feature type="binding site" evidence="2">
    <location>
        <position position="124"/>
    </location>
    <ligand>
        <name>Zn(2+)</name>
        <dbReference type="ChEBI" id="CHEBI:29105"/>
        <label>2</label>
    </ligand>
</feature>
<feature type="binding site" evidence="2">
    <location>
        <position position="136"/>
    </location>
    <ligand>
        <name>Zn(2+)</name>
        <dbReference type="ChEBI" id="CHEBI:29105"/>
        <label>2</label>
    </ligand>
</feature>
<feature type="binding site" evidence="2">
    <location>
        <position position="140"/>
    </location>
    <ligand>
        <name>Zn(2+)</name>
        <dbReference type="ChEBI" id="CHEBI:29105"/>
        <label>2</label>
    </ligand>
</feature>
<feature type="modified residue" description="Phosphoserine" evidence="1">
    <location>
        <position position="221"/>
    </location>
</feature>
<feature type="modified residue" description="Phosphothreonine" evidence="1">
    <location>
        <position position="242"/>
    </location>
</feature>
<feature type="modified residue" description="Phosphoserine" evidence="1">
    <location>
        <position position="290"/>
    </location>
</feature>
<sequence>MEGLEENGSVQVGELLPCKICGRTFFPVALKKHGPICQKTATKKRKTFDSSRQRAEGTDIPTVKPLKPRPEPPKKPSNWRRKHEEFIATIRAAKGLGQVLKEGGKLPPPPPPSYDPDYIQCPYCQRRFNENAADRHINFCKEQAARISNKGKFSTDTKGKSTSRTQYKPPALKKFNSPGTTSSGSSRLPQPSGTSKTVVGAPSGKVSSVSSSSGNKLQTLSPSHKGIPAPHVGTNIKPRNSTPPSLARNPASGVLTSKRKTYSDSYMARPDGDYISSFNGGNTKGIEGNSAGHLPKFCHECGTKYPVEWAKFCCECGVRRMVL</sequence>
<name>ZC21A_BOVIN</name>
<protein>
    <recommendedName>
        <fullName>Zinc finger C2HC domain-containing protein 1A</fullName>
    </recommendedName>
</protein>
<evidence type="ECO:0000250" key="1">
    <source>
        <dbReference type="UniProtKB" id="Q96GY0"/>
    </source>
</evidence>
<evidence type="ECO:0000255" key="2">
    <source>
        <dbReference type="PROSITE-ProRule" id="PRU01371"/>
    </source>
</evidence>
<evidence type="ECO:0000256" key="3">
    <source>
        <dbReference type="SAM" id="MobiDB-lite"/>
    </source>
</evidence>
<evidence type="ECO:0000305" key="4"/>
<keyword id="KW-0479">Metal-binding</keyword>
<keyword id="KW-0597">Phosphoprotein</keyword>
<keyword id="KW-1185">Reference proteome</keyword>
<keyword id="KW-0677">Repeat</keyword>
<keyword id="KW-0862">Zinc</keyword>
<keyword id="KW-0863">Zinc-finger</keyword>
<dbReference type="EMBL" id="BC114757">
    <property type="protein sequence ID" value="AAI14758.1"/>
    <property type="molecule type" value="mRNA"/>
</dbReference>
<dbReference type="RefSeq" id="NP_001076906.1">
    <property type="nucleotide sequence ID" value="NM_001083437.1"/>
</dbReference>
<dbReference type="RefSeq" id="XP_010810413.1">
    <property type="nucleotide sequence ID" value="XM_010812111.1"/>
</dbReference>
<dbReference type="RefSeq" id="XP_015321836.1">
    <property type="nucleotide sequence ID" value="XM_015466350.1"/>
</dbReference>
<dbReference type="FunCoup" id="A4FUE7">
    <property type="interactions" value="1969"/>
</dbReference>
<dbReference type="STRING" id="9913.ENSBTAP00000070954"/>
<dbReference type="PaxDb" id="9913-ENSBTAP00000025157"/>
<dbReference type="GeneID" id="516900"/>
<dbReference type="KEGG" id="bta:516900"/>
<dbReference type="CTD" id="51101"/>
<dbReference type="VEuPathDB" id="HostDB:ENSBTAG00000018902"/>
<dbReference type="eggNOG" id="KOG3940">
    <property type="taxonomic scope" value="Eukaryota"/>
</dbReference>
<dbReference type="HOGENOM" id="CLU_855170_0_0_1"/>
<dbReference type="InParanoid" id="A4FUE7"/>
<dbReference type="OMA" id="ARHEQIC"/>
<dbReference type="OrthoDB" id="10066537at2759"/>
<dbReference type="Proteomes" id="UP000009136">
    <property type="component" value="Chromosome 14"/>
</dbReference>
<dbReference type="Bgee" id="ENSBTAG00000018902">
    <property type="expression patterns" value="Expressed in oocyte and 109 other cell types or tissues"/>
</dbReference>
<dbReference type="GO" id="GO:0008270">
    <property type="term" value="F:zinc ion binding"/>
    <property type="evidence" value="ECO:0007669"/>
    <property type="project" value="UniProtKB-KW"/>
</dbReference>
<dbReference type="Gene3D" id="3.30.160.60">
    <property type="entry name" value="Classic Zinc Finger"/>
    <property type="match status" value="1"/>
</dbReference>
<dbReference type="InterPro" id="IPR026319">
    <property type="entry name" value="ZC2HC1A/B-like"/>
</dbReference>
<dbReference type="InterPro" id="IPR049899">
    <property type="entry name" value="Znf_C2HC_C3H"/>
</dbReference>
<dbReference type="PANTHER" id="PTHR13555">
    <property type="entry name" value="C2H2 ZINC FINGER CGI-62-RELATED"/>
    <property type="match status" value="1"/>
</dbReference>
<dbReference type="PANTHER" id="PTHR13555:SF25">
    <property type="entry name" value="ZINC FINGER C2HC DOMAIN-CONTAINING PROTEIN 1A"/>
    <property type="match status" value="1"/>
</dbReference>
<dbReference type="Pfam" id="PF13913">
    <property type="entry name" value="zf-C2HC_2"/>
    <property type="match status" value="2"/>
</dbReference>
<dbReference type="PROSITE" id="PS52027">
    <property type="entry name" value="ZF_C2HC_C3H"/>
    <property type="match status" value="2"/>
</dbReference>